<gene>
    <name evidence="1" type="primary">pdxB</name>
    <name type="ordered locus">VV1_1988</name>
</gene>
<accession>Q8DB36</accession>
<reference key="1">
    <citation type="submission" date="2002-12" db="EMBL/GenBank/DDBJ databases">
        <title>Complete genome sequence of Vibrio vulnificus CMCP6.</title>
        <authorList>
            <person name="Rhee J.H."/>
            <person name="Kim S.Y."/>
            <person name="Chung S.S."/>
            <person name="Kim J.J."/>
            <person name="Moon Y.H."/>
            <person name="Jeong H."/>
            <person name="Choy H.E."/>
        </authorList>
    </citation>
    <scope>NUCLEOTIDE SEQUENCE [LARGE SCALE GENOMIC DNA]</scope>
    <source>
        <strain>CMCP6</strain>
    </source>
</reference>
<keyword id="KW-0963">Cytoplasm</keyword>
<keyword id="KW-0520">NAD</keyword>
<keyword id="KW-0560">Oxidoreductase</keyword>
<keyword id="KW-0664">Pyridoxine biosynthesis</keyword>
<protein>
    <recommendedName>
        <fullName evidence="1">Erythronate-4-phosphate dehydrogenase</fullName>
        <ecNumber evidence="1">1.1.1.290</ecNumber>
    </recommendedName>
</protein>
<evidence type="ECO:0000255" key="1">
    <source>
        <dbReference type="HAMAP-Rule" id="MF_01825"/>
    </source>
</evidence>
<evidence type="ECO:0000305" key="2"/>
<feature type="chain" id="PRO_0000075993" description="Erythronate-4-phosphate dehydrogenase">
    <location>
        <begin position="1"/>
        <end position="377"/>
    </location>
</feature>
<feature type="active site" evidence="1">
    <location>
        <position position="209"/>
    </location>
</feature>
<feature type="active site" evidence="1">
    <location>
        <position position="238"/>
    </location>
</feature>
<feature type="active site" description="Proton donor" evidence="1">
    <location>
        <position position="255"/>
    </location>
</feature>
<feature type="binding site" evidence="1">
    <location>
        <position position="45"/>
    </location>
    <ligand>
        <name>substrate</name>
    </ligand>
</feature>
<feature type="binding site" evidence="1">
    <location>
        <position position="67"/>
    </location>
    <ligand>
        <name>substrate</name>
    </ligand>
</feature>
<feature type="binding site" evidence="1">
    <location>
        <begin position="127"/>
        <end position="128"/>
    </location>
    <ligand>
        <name>NAD(+)</name>
        <dbReference type="ChEBI" id="CHEBI:57540"/>
    </ligand>
</feature>
<feature type="binding site" evidence="1">
    <location>
        <position position="147"/>
    </location>
    <ligand>
        <name>NAD(+)</name>
        <dbReference type="ChEBI" id="CHEBI:57540"/>
    </ligand>
</feature>
<feature type="binding site" evidence="1">
    <location>
        <position position="176"/>
    </location>
    <ligand>
        <name>NAD(+)</name>
        <dbReference type="ChEBI" id="CHEBI:57540"/>
    </ligand>
</feature>
<feature type="binding site" evidence="1">
    <location>
        <position position="233"/>
    </location>
    <ligand>
        <name>NAD(+)</name>
        <dbReference type="ChEBI" id="CHEBI:57540"/>
    </ligand>
</feature>
<feature type="binding site" evidence="1">
    <location>
        <position position="258"/>
    </location>
    <ligand>
        <name>NAD(+)</name>
        <dbReference type="ChEBI" id="CHEBI:57540"/>
    </ligand>
</feature>
<feature type="binding site" evidence="1">
    <location>
        <position position="259"/>
    </location>
    <ligand>
        <name>substrate</name>
    </ligand>
</feature>
<comment type="function">
    <text evidence="1">Catalyzes the oxidation of erythronate-4-phosphate to 3-hydroxy-2-oxo-4-phosphonooxybutanoate.</text>
</comment>
<comment type="catalytic activity">
    <reaction evidence="1">
        <text>4-phospho-D-erythronate + NAD(+) = (R)-3-hydroxy-2-oxo-4-phosphooxybutanoate + NADH + H(+)</text>
        <dbReference type="Rhea" id="RHEA:18829"/>
        <dbReference type="ChEBI" id="CHEBI:15378"/>
        <dbReference type="ChEBI" id="CHEBI:57540"/>
        <dbReference type="ChEBI" id="CHEBI:57945"/>
        <dbReference type="ChEBI" id="CHEBI:58538"/>
        <dbReference type="ChEBI" id="CHEBI:58766"/>
        <dbReference type="EC" id="1.1.1.290"/>
    </reaction>
</comment>
<comment type="pathway">
    <text evidence="1">Cofactor biosynthesis; pyridoxine 5'-phosphate biosynthesis; pyridoxine 5'-phosphate from D-erythrose 4-phosphate: step 2/5.</text>
</comment>
<comment type="subunit">
    <text evidence="1">Homodimer.</text>
</comment>
<comment type="subcellular location">
    <subcellularLocation>
        <location evidence="1">Cytoplasm</location>
    </subcellularLocation>
</comment>
<comment type="similarity">
    <text evidence="1">Belongs to the D-isomer specific 2-hydroxyacid dehydrogenase family. PdxB subfamily.</text>
</comment>
<comment type="sequence caution" evidence="2">
    <conflict type="erroneous initiation">
        <sequence resource="EMBL-CDS" id="AAO10387"/>
    </conflict>
</comment>
<proteinExistence type="inferred from homology"/>
<name>PDXB_VIBVU</name>
<sequence>MKILVDENMPYAETLFSQLGEVILKPGRSLTADDLVDIDALMIRSVTKVNAALISKANKLKFVGTATAGMDHVDQALLKEKGIYFTAAPGCNKVGVAEYVFSVMMVLAQQQGFSVFEQTVGIIGAGQVGSYLQQCLQGIGIKVLINDPFKQEEGDEREFTSLDRLLQEADVITLHTPITRDGKYPTHHLINEEILNSLRADQILINAARGPVVDNQALKRRLQQADGFMAALDVFEFEPEVDMELLPLLAFATPHVAGYGLEGKARGTTMIFNSYCEFIGNELRAHASDLLPTAPVPKVVLDRKWDEATLHTLTQLVYDVRRDDAQFRREIGAPGAFDLMRKEYWDRREYSAVTLVGSAQCRLKPLAKLGFQVEVSQ</sequence>
<dbReference type="EC" id="1.1.1.290" evidence="1"/>
<dbReference type="EMBL" id="AE016795">
    <property type="protein sequence ID" value="AAO10387.1"/>
    <property type="status" value="ALT_INIT"/>
    <property type="molecule type" value="Genomic_DNA"/>
</dbReference>
<dbReference type="RefSeq" id="WP_043921088.1">
    <property type="nucleotide sequence ID" value="NC_004459.3"/>
</dbReference>
<dbReference type="SMR" id="Q8DB36"/>
<dbReference type="KEGG" id="vvu:VV1_1988"/>
<dbReference type="HOGENOM" id="CLU_019796_4_0_6"/>
<dbReference type="UniPathway" id="UPA00244">
    <property type="reaction ID" value="UER00310"/>
</dbReference>
<dbReference type="Proteomes" id="UP000002275">
    <property type="component" value="Chromosome 1"/>
</dbReference>
<dbReference type="GO" id="GO:0005737">
    <property type="term" value="C:cytoplasm"/>
    <property type="evidence" value="ECO:0007669"/>
    <property type="project" value="UniProtKB-SubCell"/>
</dbReference>
<dbReference type="GO" id="GO:0033711">
    <property type="term" value="F:4-phosphoerythronate dehydrogenase activity"/>
    <property type="evidence" value="ECO:0007669"/>
    <property type="project" value="UniProtKB-EC"/>
</dbReference>
<dbReference type="GO" id="GO:0051287">
    <property type="term" value="F:NAD binding"/>
    <property type="evidence" value="ECO:0007669"/>
    <property type="project" value="InterPro"/>
</dbReference>
<dbReference type="GO" id="GO:0046983">
    <property type="term" value="F:protein dimerization activity"/>
    <property type="evidence" value="ECO:0007669"/>
    <property type="project" value="InterPro"/>
</dbReference>
<dbReference type="GO" id="GO:0008615">
    <property type="term" value="P:pyridoxine biosynthetic process"/>
    <property type="evidence" value="ECO:0007669"/>
    <property type="project" value="UniProtKB-UniRule"/>
</dbReference>
<dbReference type="CDD" id="cd12158">
    <property type="entry name" value="ErythrP_dh"/>
    <property type="match status" value="1"/>
</dbReference>
<dbReference type="FunFam" id="3.40.50.720:FF:000093">
    <property type="entry name" value="Erythronate-4-phosphate dehydrogenase"/>
    <property type="match status" value="1"/>
</dbReference>
<dbReference type="Gene3D" id="3.30.1370.170">
    <property type="match status" value="1"/>
</dbReference>
<dbReference type="Gene3D" id="3.40.50.720">
    <property type="entry name" value="NAD(P)-binding Rossmann-like Domain"/>
    <property type="match status" value="2"/>
</dbReference>
<dbReference type="HAMAP" id="MF_01825">
    <property type="entry name" value="PdxB"/>
    <property type="match status" value="1"/>
</dbReference>
<dbReference type="InterPro" id="IPR050418">
    <property type="entry name" value="D-iso_2-hydroxyacid_DH_PdxB"/>
</dbReference>
<dbReference type="InterPro" id="IPR006139">
    <property type="entry name" value="D-isomer_2_OHA_DH_cat_dom"/>
</dbReference>
<dbReference type="InterPro" id="IPR029753">
    <property type="entry name" value="D-isomer_DH_CS"/>
</dbReference>
<dbReference type="InterPro" id="IPR006140">
    <property type="entry name" value="D-isomer_DH_NAD-bd"/>
</dbReference>
<dbReference type="InterPro" id="IPR020921">
    <property type="entry name" value="Erythronate-4-P_DHase"/>
</dbReference>
<dbReference type="InterPro" id="IPR024531">
    <property type="entry name" value="Erythronate-4-P_DHase_dimer"/>
</dbReference>
<dbReference type="InterPro" id="IPR036291">
    <property type="entry name" value="NAD(P)-bd_dom_sf"/>
</dbReference>
<dbReference type="InterPro" id="IPR038251">
    <property type="entry name" value="PdxB_dimer_sf"/>
</dbReference>
<dbReference type="PANTHER" id="PTHR43761:SF1">
    <property type="entry name" value="D-ISOMER SPECIFIC 2-HYDROXYACID DEHYDROGENASE CATALYTIC DOMAIN-CONTAINING PROTEIN-RELATED"/>
    <property type="match status" value="1"/>
</dbReference>
<dbReference type="PANTHER" id="PTHR43761">
    <property type="entry name" value="D-ISOMER SPECIFIC 2-HYDROXYACID DEHYDROGENASE FAMILY PROTEIN (AFU_ORTHOLOGUE AFUA_1G13630)"/>
    <property type="match status" value="1"/>
</dbReference>
<dbReference type="Pfam" id="PF00389">
    <property type="entry name" value="2-Hacid_dh"/>
    <property type="match status" value="1"/>
</dbReference>
<dbReference type="Pfam" id="PF02826">
    <property type="entry name" value="2-Hacid_dh_C"/>
    <property type="match status" value="1"/>
</dbReference>
<dbReference type="Pfam" id="PF11890">
    <property type="entry name" value="DUF3410"/>
    <property type="match status" value="1"/>
</dbReference>
<dbReference type="SUPFAM" id="SSF52283">
    <property type="entry name" value="Formate/glycerate dehydrogenase catalytic domain-like"/>
    <property type="match status" value="1"/>
</dbReference>
<dbReference type="SUPFAM" id="SSF51735">
    <property type="entry name" value="NAD(P)-binding Rossmann-fold domains"/>
    <property type="match status" value="1"/>
</dbReference>
<dbReference type="PROSITE" id="PS00671">
    <property type="entry name" value="D_2_HYDROXYACID_DH_3"/>
    <property type="match status" value="1"/>
</dbReference>
<organism>
    <name type="scientific">Vibrio vulnificus (strain CMCP6)</name>
    <dbReference type="NCBI Taxonomy" id="216895"/>
    <lineage>
        <taxon>Bacteria</taxon>
        <taxon>Pseudomonadati</taxon>
        <taxon>Pseudomonadota</taxon>
        <taxon>Gammaproteobacteria</taxon>
        <taxon>Vibrionales</taxon>
        <taxon>Vibrionaceae</taxon>
        <taxon>Vibrio</taxon>
    </lineage>
</organism>